<sequence>MNTFSQVWVFSDTPSRLPELMNGAQALANQINTFVLNDADGVQAIQLGANHVWKLNGKPDDRMIEDYAGVMADTIRQHGADGLVLLPNTRRGKLLAAKLGYRLKAAVSNDASTVSVQDGKATVKHMVYGGLAIGEERIATPYAVLTISSGTFDAAQPDASRTGETHTVEWQAPAVAITRTATQARQSNSVDLDKARLVVSVGRGIGSKENIALAEQLCKAIGAELACSRPVAENEKWMEHERYVGISNLMLKPELYLAVGISGQIQHMVGANASQTIFAINKDKNAPIFQYADYGIVGDAVKILPALTAALAR</sequence>
<evidence type="ECO:0000255" key="1">
    <source>
        <dbReference type="HAMAP-Rule" id="MF_01056"/>
    </source>
</evidence>
<reference key="1">
    <citation type="journal article" date="2008" name="J. Bacteriol.">
        <title>The pangenome structure of Escherichia coli: comparative genomic analysis of E. coli commensal and pathogenic isolates.</title>
        <authorList>
            <person name="Rasko D.A."/>
            <person name="Rosovitz M.J."/>
            <person name="Myers G.S.A."/>
            <person name="Mongodin E.F."/>
            <person name="Fricke W.F."/>
            <person name="Gajer P."/>
            <person name="Crabtree J."/>
            <person name="Sebaihia M."/>
            <person name="Thomson N.R."/>
            <person name="Chaudhuri R."/>
            <person name="Henderson I.R."/>
            <person name="Sperandio V."/>
            <person name="Ravel J."/>
        </authorList>
    </citation>
    <scope>NUCLEOTIDE SEQUENCE [LARGE SCALE GENOMIC DNA]</scope>
    <source>
        <strain>HS</strain>
    </source>
</reference>
<organism>
    <name type="scientific">Escherichia coli O9:H4 (strain HS)</name>
    <dbReference type="NCBI Taxonomy" id="331112"/>
    <lineage>
        <taxon>Bacteria</taxon>
        <taxon>Pseudomonadati</taxon>
        <taxon>Pseudomonadota</taxon>
        <taxon>Gammaproteobacteria</taxon>
        <taxon>Enterobacterales</taxon>
        <taxon>Enterobacteriaceae</taxon>
        <taxon>Escherichia</taxon>
    </lineage>
</organism>
<dbReference type="EMBL" id="CP000802">
    <property type="protein sequence ID" value="ABV04448.1"/>
    <property type="molecule type" value="Genomic_DNA"/>
</dbReference>
<dbReference type="RefSeq" id="WP_001091528.1">
    <property type="nucleotide sequence ID" value="NC_009800.1"/>
</dbReference>
<dbReference type="SMR" id="A7ZVZ4"/>
<dbReference type="KEGG" id="ecx:EcHS_A0048"/>
<dbReference type="HOGENOM" id="CLU_034178_0_1_6"/>
<dbReference type="UniPathway" id="UPA00117"/>
<dbReference type="GO" id="GO:0009055">
    <property type="term" value="F:electron transfer activity"/>
    <property type="evidence" value="ECO:0007669"/>
    <property type="project" value="InterPro"/>
</dbReference>
<dbReference type="GO" id="GO:0050660">
    <property type="term" value="F:flavin adenine dinucleotide binding"/>
    <property type="evidence" value="ECO:0007669"/>
    <property type="project" value="InterPro"/>
</dbReference>
<dbReference type="GO" id="GO:0009437">
    <property type="term" value="P:carnitine metabolic process"/>
    <property type="evidence" value="ECO:0007669"/>
    <property type="project" value="UniProtKB-UniRule"/>
</dbReference>
<dbReference type="GO" id="GO:0033539">
    <property type="term" value="P:fatty acid beta-oxidation using acyl-CoA dehydrogenase"/>
    <property type="evidence" value="ECO:0007669"/>
    <property type="project" value="TreeGrafter"/>
</dbReference>
<dbReference type="FunFam" id="3.40.50.1220:FF:000004">
    <property type="entry name" value="Electron transfer flavoprotein"/>
    <property type="match status" value="1"/>
</dbReference>
<dbReference type="FunFam" id="3.40.50.620:FF:000067">
    <property type="entry name" value="Protein FixB"/>
    <property type="match status" value="1"/>
</dbReference>
<dbReference type="Gene3D" id="3.40.50.620">
    <property type="entry name" value="HUPs"/>
    <property type="match status" value="1"/>
</dbReference>
<dbReference type="Gene3D" id="3.40.50.1220">
    <property type="entry name" value="TPP-binding domain"/>
    <property type="match status" value="1"/>
</dbReference>
<dbReference type="HAMAP" id="MF_01056">
    <property type="entry name" value="FixB"/>
    <property type="match status" value="1"/>
</dbReference>
<dbReference type="InterPro" id="IPR029035">
    <property type="entry name" value="DHS-like_NAD/FAD-binding_dom"/>
</dbReference>
<dbReference type="InterPro" id="IPR014730">
    <property type="entry name" value="ETF_a/b_N"/>
</dbReference>
<dbReference type="InterPro" id="IPR001308">
    <property type="entry name" value="ETF_a/FixB"/>
</dbReference>
<dbReference type="InterPro" id="IPR014731">
    <property type="entry name" value="ETF_asu_C"/>
</dbReference>
<dbReference type="InterPro" id="IPR018206">
    <property type="entry name" value="ETF_asu_C_CS"/>
</dbReference>
<dbReference type="InterPro" id="IPR023461">
    <property type="entry name" value="FixB"/>
</dbReference>
<dbReference type="InterPro" id="IPR014729">
    <property type="entry name" value="Rossmann-like_a/b/a_fold"/>
</dbReference>
<dbReference type="NCBIfam" id="NF002889">
    <property type="entry name" value="PRK03363.1"/>
    <property type="match status" value="1"/>
</dbReference>
<dbReference type="PANTHER" id="PTHR43153">
    <property type="entry name" value="ELECTRON TRANSFER FLAVOPROTEIN ALPHA"/>
    <property type="match status" value="1"/>
</dbReference>
<dbReference type="PANTHER" id="PTHR43153:SF5">
    <property type="entry name" value="PROTEIN FIXB-RELATED"/>
    <property type="match status" value="1"/>
</dbReference>
<dbReference type="Pfam" id="PF01012">
    <property type="entry name" value="ETF"/>
    <property type="match status" value="1"/>
</dbReference>
<dbReference type="Pfam" id="PF00766">
    <property type="entry name" value="ETF_alpha"/>
    <property type="match status" value="1"/>
</dbReference>
<dbReference type="PIRSF" id="PIRSF000089">
    <property type="entry name" value="Electra_flavoP_a"/>
    <property type="match status" value="1"/>
</dbReference>
<dbReference type="SMART" id="SM00893">
    <property type="entry name" value="ETF"/>
    <property type="match status" value="1"/>
</dbReference>
<dbReference type="SUPFAM" id="SSF52402">
    <property type="entry name" value="Adenine nucleotide alpha hydrolases-like"/>
    <property type="match status" value="1"/>
</dbReference>
<dbReference type="SUPFAM" id="SSF52467">
    <property type="entry name" value="DHS-like NAD/FAD-binding domain"/>
    <property type="match status" value="1"/>
</dbReference>
<dbReference type="PROSITE" id="PS00696">
    <property type="entry name" value="ETF_ALPHA"/>
    <property type="match status" value="1"/>
</dbReference>
<accession>A7ZVZ4</accession>
<gene>
    <name evidence="1" type="primary">fixB</name>
    <name type="ordered locus">EcHS_A0048</name>
</gene>
<name>FIXB_ECOHS</name>
<protein>
    <recommendedName>
        <fullName evidence="1">Protein FixB</fullName>
    </recommendedName>
</protein>
<feature type="chain" id="PRO_1000064383" description="Protein FixB">
    <location>
        <begin position="1"/>
        <end position="313"/>
    </location>
</feature>
<feature type="binding site" evidence="1">
    <location>
        <begin position="255"/>
        <end position="283"/>
    </location>
    <ligand>
        <name>FAD</name>
        <dbReference type="ChEBI" id="CHEBI:57692"/>
    </ligand>
</feature>
<comment type="function">
    <text evidence="1">Required for anaerobic carnitine reduction. May bring reductant to CaiA.</text>
</comment>
<comment type="pathway">
    <text evidence="1">Amine and polyamine metabolism; carnitine metabolism.</text>
</comment>
<comment type="subunit">
    <text evidence="1">Heterodimer of FixA and FixB.</text>
</comment>
<comment type="similarity">
    <text evidence="1">Belongs to the ETF alpha-subunit/FixB family.</text>
</comment>
<keyword id="KW-0249">Electron transport</keyword>
<keyword id="KW-0274">FAD</keyword>
<keyword id="KW-0285">Flavoprotein</keyword>
<keyword id="KW-0813">Transport</keyword>
<proteinExistence type="inferred from homology"/>